<feature type="transit peptide" description="Mitochondrion" evidence="3">
    <location>
        <begin position="1"/>
        <end position="22"/>
    </location>
</feature>
<feature type="chain" id="PRO_0000445313" description="ATP synthase subunit delta, mitochondrial" evidence="5">
    <location>
        <begin position="23"/>
        <end position="160"/>
    </location>
</feature>
<name>ATPD_PICAN</name>
<accession>C0HK54</accession>
<evidence type="ECO:0000250" key="1">
    <source>
        <dbReference type="UniProtKB" id="Q12165"/>
    </source>
</evidence>
<evidence type="ECO:0000250" key="2">
    <source>
        <dbReference type="UniProtKB" id="Q6C877"/>
    </source>
</evidence>
<evidence type="ECO:0000269" key="3">
    <source>
    </source>
</evidence>
<evidence type="ECO:0000269" key="4">
    <source>
    </source>
</evidence>
<evidence type="ECO:0000269" key="5">
    <source ref="2"/>
</evidence>
<evidence type="ECO:0000303" key="6">
    <source>
    </source>
</evidence>
<evidence type="ECO:0000303" key="7">
    <source ref="2"/>
</evidence>
<evidence type="ECO:0000305" key="8"/>
<evidence type="ECO:0000305" key="9">
    <source>
    </source>
</evidence>
<gene>
    <name evidence="1" type="primary">ATP16</name>
</gene>
<keyword id="KW-0066">ATP synthesis</keyword>
<keyword id="KW-0139">CF(1)</keyword>
<keyword id="KW-0903">Direct protein sequencing</keyword>
<keyword id="KW-0375">Hydrogen ion transport</keyword>
<keyword id="KW-0406">Ion transport</keyword>
<keyword id="KW-0472">Membrane</keyword>
<keyword id="KW-0496">Mitochondrion</keyword>
<keyword id="KW-0999">Mitochondrion inner membrane</keyword>
<keyword id="KW-0809">Transit peptide</keyword>
<keyword id="KW-0813">Transport</keyword>
<proteinExistence type="evidence at protein level"/>
<reference evidence="8" key="1">
    <citation type="journal article" date="2015" name="Biochem. J.">
        <title>The purification and characterization of ATP synthase complexes from the mitochondria of four fungal species.</title>
        <authorList>
            <person name="Liu S."/>
            <person name="Charlesworth T.J."/>
            <person name="Bason J.V."/>
            <person name="Montgomery M.G."/>
            <person name="Harbour M.E."/>
            <person name="Fearnley I.M."/>
            <person name="Walker J.E."/>
        </authorList>
    </citation>
    <scope>NUCLEOTIDE SEQUENCE [GENOMIC DNA]</scope>
    <scope>PROTEIN SEQUENCE OF 23-29</scope>
    <scope>IDENTIFICATION IN ATP SYNTHASE COMPLEX</scope>
    <scope>FUNCTION OF ATPASE COMPLEX</scope>
    <scope>SUBUNIT</scope>
    <scope>SUBCELLULAR LOCATION</scope>
    <scope>MASS SPECTROMETRY</scope>
    <scope>IDENTIFICATION BY MASS SPECTROMETRY</scope>
    <source>
        <strain evidence="6">A16 / NCYC 2310</strain>
    </source>
</reference>
<reference evidence="8" key="2">
    <citation type="submission" date="2016-08" db="UniProtKB">
        <authorList>
            <person name="Fearnley I.M."/>
        </authorList>
    </citation>
    <scope>PARTIAL PROTEIN SEQUENCE</scope>
    <source>
        <strain evidence="7">A16 / NCYC 2310</strain>
    </source>
</reference>
<reference evidence="8" key="3">
    <citation type="journal article" date="2016" name="Proc. Natl. Acad. Sci. U.S.A.">
        <title>Structure of the mitochondrial ATP synthase from Pichia angusta determined by electron cryo-microscopy.</title>
        <authorList>
            <person name="Vinothkumar K.R."/>
            <person name="Montgomery M.G."/>
            <person name="Liu S."/>
            <person name="Walker J.E."/>
        </authorList>
    </citation>
    <scope>STRUCTURE BY ELECTRON MICROSCOPY (7.0 ANGSTROMS) OF MONOMERIC ATP SYNTHASE COMPLEX IN COMPLEX WITH BOVINE ATPIF1</scope>
    <scope>FUNCTION</scope>
    <scope>SUBUNIT</scope>
    <scope>SUBCELLULAR LOCATION</scope>
</reference>
<sequence>MFRQSLRSIARTRTGTIGVRTYAEAVNPDVLKVSLVAPHQAIFTNKEVSQVNLPASSGEMGVLANHVPTVEELAPGVVEVIESSGTASKYFVSGGFASILPGSKLSISTVEAHPLDAFSSENIKSLLAEAQKNASSADETVAAEAAIEIEVLEALQAAVH</sequence>
<protein>
    <recommendedName>
        <fullName evidence="1">ATP synthase subunit delta, mitochondrial</fullName>
    </recommendedName>
    <alternativeName>
        <fullName evidence="1">F-ATPase delta subunit</fullName>
    </alternativeName>
</protein>
<dbReference type="SMR" id="C0HK54"/>
<dbReference type="GO" id="GO:0005743">
    <property type="term" value="C:mitochondrial inner membrane"/>
    <property type="evidence" value="ECO:0007669"/>
    <property type="project" value="UniProtKB-SubCell"/>
</dbReference>
<dbReference type="GO" id="GO:0045259">
    <property type="term" value="C:proton-transporting ATP synthase complex"/>
    <property type="evidence" value="ECO:0007669"/>
    <property type="project" value="UniProtKB-KW"/>
</dbReference>
<dbReference type="GO" id="GO:0046933">
    <property type="term" value="F:proton-transporting ATP synthase activity, rotational mechanism"/>
    <property type="evidence" value="ECO:0007669"/>
    <property type="project" value="InterPro"/>
</dbReference>
<dbReference type="CDD" id="cd12152">
    <property type="entry name" value="F1-ATPase_delta"/>
    <property type="match status" value="1"/>
</dbReference>
<dbReference type="FunFam" id="2.60.15.10:FF:000003">
    <property type="entry name" value="ATP synthase subunit delta, mitochondrial"/>
    <property type="match status" value="1"/>
</dbReference>
<dbReference type="Gene3D" id="6.10.140.880">
    <property type="match status" value="1"/>
</dbReference>
<dbReference type="Gene3D" id="2.60.15.10">
    <property type="entry name" value="F0F1 ATP synthase delta/epsilon subunit, N-terminal"/>
    <property type="match status" value="1"/>
</dbReference>
<dbReference type="HAMAP" id="MF_00530">
    <property type="entry name" value="ATP_synth_epsil_bac"/>
    <property type="match status" value="1"/>
</dbReference>
<dbReference type="InterPro" id="IPR001469">
    <property type="entry name" value="ATP_synth_F1_dsu/esu"/>
</dbReference>
<dbReference type="InterPro" id="IPR020546">
    <property type="entry name" value="ATP_synth_F1_dsu/esu_N"/>
</dbReference>
<dbReference type="InterPro" id="IPR048938">
    <property type="entry name" value="ATPD_C_fung"/>
</dbReference>
<dbReference type="InterPro" id="IPR036771">
    <property type="entry name" value="ATPsynth_dsu/esu_N"/>
</dbReference>
<dbReference type="PANTHER" id="PTHR13822">
    <property type="entry name" value="ATP SYNTHASE DELTA/EPSILON CHAIN"/>
    <property type="match status" value="1"/>
</dbReference>
<dbReference type="PANTHER" id="PTHR13822:SF7">
    <property type="entry name" value="ATP SYNTHASE SUBUNIT DELTA, MITOCHONDRIAL"/>
    <property type="match status" value="1"/>
</dbReference>
<dbReference type="Pfam" id="PF02823">
    <property type="entry name" value="ATP-synt_DE_N"/>
    <property type="match status" value="1"/>
</dbReference>
<dbReference type="Pfam" id="PF21334">
    <property type="entry name" value="ATPD_C_fung"/>
    <property type="match status" value="1"/>
</dbReference>
<dbReference type="SUPFAM" id="SSF51344">
    <property type="entry name" value="Epsilon subunit of F1F0-ATP synthase N-terminal domain"/>
    <property type="match status" value="1"/>
</dbReference>
<comment type="function">
    <text evidence="2 3 4">Mitochondrial membrane ATP synthase (F(1)F(0) ATP synthase or Complex V) produces ATP from ADP in the presence of a proton gradient across the membrane which is generated by electron transport complexes of the respiratory chain (PubMed:25759169). F-type ATP synthases consist of two structural domains, F(1) - containing the extramembraneous catalytic core, and F(0) - containing the membrane proton channel, linked together by a central stalk and a peripheral stalk (PubMed:27791192). During catalysis, ATP synthesis in the catalytic domain of F(1) is coupled via a rotary mechanism of the central stalk subunits to proton translocation (By similarity). Part of the complex F(1) domain and the central stalk which is part of the complex rotary element (By similarity). Rotation of the central stalk against the surrounding alpha/ATP1(3)beta/ATP2(3) subunits leads to hydrolysis of ATP in three separate catalytic sites on the beta/ATP2 subunits (By similarity).</text>
</comment>
<comment type="subunit">
    <text evidence="2 3 4">F-type ATP synthases have 2 components, the catalytic core F(1) and the membrane-embedded component F(0), linked together by a central stalk and a peripheral stalk (PubMed:27791192). The central stalk, also called rotor shaft, is often seen as part of F(1) (PubMed:27791192). The peripheral stalk is seen as part of F(0). F(0) contains the membrane channel next to the rotor (PubMed:27791192). F-type ATP synthases form dimers but each monomer functions independently in ATP generation (By similarity). The dimer consists of 18 different polypeptides: ATP1 (subunit alpha, part of F(1), 3 molecules per monomer), ATP2 (subunit beta, part of F(1), 3 molecules per monomer), ATP3 (subunit gamma, part of the central stalk), ATP4 (subunit b, part of the peripheral stalk), ATP5/OSCP (subunit 5/OSCP, part of the peripheral stalk), ATP6 (subunit a, part of the peripheral stalk), ATP7 (subunit d, part of the peripheral stalk), ATP8 (subunit 8, part of the peripheral stalk), OLI1 (subunit c, part of the rotor, 10 molecules per monomer), ATP14 (subunit h, part of the peripheral stalk), ATP15 (subunit epsilon, part of the central stalk), ATP16 (subunit delta, part of the central stalk), ATP17 (subunit f, part of the peripheral stalk), ATP18 (subunit i/j, part of the peripheral stalk) (PubMed:25759169, PubMed:27791192). Dimer-specific subunits are ATP19 (subunit k, at interface between monomers), ATP20 (subunit g, at interface between monomers), TIM11 (subunit e, at interface between monomers) (By similarity). Also contains subunit L (PubMed:25759169).</text>
</comment>
<comment type="subcellular location">
    <subcellularLocation>
        <location evidence="9">Mitochondrion inner membrane</location>
        <topology evidence="9">Peripheral membrane protein</topology>
        <orientation evidence="9">Matrix side</orientation>
    </subcellularLocation>
    <text evidence="9">The F-type ATP synthase complex is anchored in the mitochondrial inner membrane via the F(0) domain with the F(1) domain and the peripheral stalk extending into the mitochondrial matrix.</text>
</comment>
<comment type="mass spectrometry"/>
<comment type="similarity">
    <text evidence="8">Belongs to the ATPase epsilon chain family.</text>
</comment>
<organism evidence="6">
    <name type="scientific">Pichia angusta</name>
    <name type="common">Yeast</name>
    <name type="synonym">Hansenula polymorpha</name>
    <dbReference type="NCBI Taxonomy" id="870730"/>
    <lineage>
        <taxon>Eukaryota</taxon>
        <taxon>Fungi</taxon>
        <taxon>Dikarya</taxon>
        <taxon>Ascomycota</taxon>
        <taxon>Saccharomycotina</taxon>
        <taxon>Pichiomycetes</taxon>
        <taxon>Pichiales</taxon>
        <taxon>Pichiaceae</taxon>
        <taxon>Ogataea</taxon>
    </lineage>
</organism>